<accession>Q24705</accession>
<reference key="1">
    <citation type="journal article" date="1995" name="Mech. Dev.">
        <title>Conservation of complex expression domains of the pdm-2 POU domain gene between Drosophila virilis and Drosophila melanogaster.</title>
        <authorList>
            <person name="Poole S.J."/>
        </authorList>
    </citation>
    <scope>NUCLEOTIDE SEQUENCE [GENOMIC DNA]</scope>
    <source>
        <tissue>Embryo</tissue>
    </source>
</reference>
<organism>
    <name type="scientific">Drosophila virilis</name>
    <name type="common">Fruit fly</name>
    <dbReference type="NCBI Taxonomy" id="7244"/>
    <lineage>
        <taxon>Eukaryota</taxon>
        <taxon>Metazoa</taxon>
        <taxon>Ecdysozoa</taxon>
        <taxon>Arthropoda</taxon>
        <taxon>Hexapoda</taxon>
        <taxon>Insecta</taxon>
        <taxon>Pterygota</taxon>
        <taxon>Neoptera</taxon>
        <taxon>Endopterygota</taxon>
        <taxon>Diptera</taxon>
        <taxon>Brachycera</taxon>
        <taxon>Muscomorpha</taxon>
        <taxon>Ephydroidea</taxon>
        <taxon>Drosophilidae</taxon>
        <taxon>Drosophila</taxon>
    </lineage>
</organism>
<protein>
    <recommendedName>
        <fullName>POU domain protein 2</fullName>
    </recommendedName>
    <alternativeName>
        <fullName>Miti-mere</fullName>
    </alternativeName>
    <alternativeName>
        <fullName>Pdm-2</fullName>
    </alternativeName>
    <alternativeName>
        <fullName>Protein didymous</fullName>
    </alternativeName>
    <alternativeName>
        <fullName>dOct2</fullName>
    </alternativeName>
    <alternativeName>
        <fullName>dPOU-28</fullName>
    </alternativeName>
</protein>
<dbReference type="EMBL" id="U14723">
    <property type="protein sequence ID" value="AAA21584.1"/>
    <property type="molecule type" value="Genomic_DNA"/>
</dbReference>
<dbReference type="SMR" id="Q24705"/>
<dbReference type="EnsemblMetazoa" id="XM_002059182.3">
    <property type="protein sequence ID" value="XP_002059218.3"/>
    <property type="gene ID" value="LOC6635747"/>
</dbReference>
<dbReference type="eggNOG" id="KOG3802">
    <property type="taxonomic scope" value="Eukaryota"/>
</dbReference>
<dbReference type="OrthoDB" id="6358449at2759"/>
<dbReference type="GO" id="GO:0005634">
    <property type="term" value="C:nucleus"/>
    <property type="evidence" value="ECO:0007669"/>
    <property type="project" value="UniProtKB-SubCell"/>
</dbReference>
<dbReference type="GO" id="GO:0000981">
    <property type="term" value="F:DNA-binding transcription factor activity, RNA polymerase II-specific"/>
    <property type="evidence" value="ECO:0007669"/>
    <property type="project" value="InterPro"/>
</dbReference>
<dbReference type="GO" id="GO:0000978">
    <property type="term" value="F:RNA polymerase II cis-regulatory region sequence-specific DNA binding"/>
    <property type="evidence" value="ECO:0007669"/>
    <property type="project" value="TreeGrafter"/>
</dbReference>
<dbReference type="GO" id="GO:0048468">
    <property type="term" value="P:cell development"/>
    <property type="evidence" value="ECO:0007669"/>
    <property type="project" value="UniProtKB-ARBA"/>
</dbReference>
<dbReference type="GO" id="GO:0048699">
    <property type="term" value="P:generation of neurons"/>
    <property type="evidence" value="ECO:0007669"/>
    <property type="project" value="UniProtKB-ARBA"/>
</dbReference>
<dbReference type="GO" id="GO:0045944">
    <property type="term" value="P:positive regulation of transcription by RNA polymerase II"/>
    <property type="evidence" value="ECO:0007669"/>
    <property type="project" value="UniProtKB-ARBA"/>
</dbReference>
<dbReference type="CDD" id="cd00086">
    <property type="entry name" value="homeodomain"/>
    <property type="match status" value="1"/>
</dbReference>
<dbReference type="FunFam" id="1.10.260.40:FF:000001">
    <property type="entry name" value="POU domain protein"/>
    <property type="match status" value="1"/>
</dbReference>
<dbReference type="Gene3D" id="1.10.10.60">
    <property type="entry name" value="Homeodomain-like"/>
    <property type="match status" value="1"/>
</dbReference>
<dbReference type="Gene3D" id="1.10.260.40">
    <property type="entry name" value="lambda repressor-like DNA-binding domains"/>
    <property type="match status" value="1"/>
</dbReference>
<dbReference type="InterPro" id="IPR001356">
    <property type="entry name" value="HD"/>
</dbReference>
<dbReference type="InterPro" id="IPR017970">
    <property type="entry name" value="Homeobox_CS"/>
</dbReference>
<dbReference type="InterPro" id="IPR009057">
    <property type="entry name" value="Homeodomain-like_sf"/>
</dbReference>
<dbReference type="InterPro" id="IPR010982">
    <property type="entry name" value="Lambda_DNA-bd_dom_sf"/>
</dbReference>
<dbReference type="InterPro" id="IPR013847">
    <property type="entry name" value="POU"/>
</dbReference>
<dbReference type="InterPro" id="IPR000327">
    <property type="entry name" value="POU_dom"/>
</dbReference>
<dbReference type="InterPro" id="IPR050255">
    <property type="entry name" value="POU_domain_TF"/>
</dbReference>
<dbReference type="PANTHER" id="PTHR11636">
    <property type="entry name" value="POU DOMAIN"/>
    <property type="match status" value="1"/>
</dbReference>
<dbReference type="PANTHER" id="PTHR11636:SF89">
    <property type="entry name" value="POU DOMAIN PROTEIN 2, ISOFORM B-RELATED"/>
    <property type="match status" value="1"/>
</dbReference>
<dbReference type="Pfam" id="PF00046">
    <property type="entry name" value="Homeodomain"/>
    <property type="match status" value="1"/>
</dbReference>
<dbReference type="Pfam" id="PF00157">
    <property type="entry name" value="Pou"/>
    <property type="match status" value="1"/>
</dbReference>
<dbReference type="PRINTS" id="PR00028">
    <property type="entry name" value="POUDOMAIN"/>
</dbReference>
<dbReference type="SMART" id="SM00389">
    <property type="entry name" value="HOX"/>
    <property type="match status" value="1"/>
</dbReference>
<dbReference type="SMART" id="SM00352">
    <property type="entry name" value="POU"/>
    <property type="match status" value="1"/>
</dbReference>
<dbReference type="SUPFAM" id="SSF46689">
    <property type="entry name" value="Homeodomain-like"/>
    <property type="match status" value="1"/>
</dbReference>
<dbReference type="SUPFAM" id="SSF47413">
    <property type="entry name" value="lambda repressor-like DNA-binding domains"/>
    <property type="match status" value="1"/>
</dbReference>
<dbReference type="PROSITE" id="PS00027">
    <property type="entry name" value="HOMEOBOX_1"/>
    <property type="match status" value="1"/>
</dbReference>
<dbReference type="PROSITE" id="PS50071">
    <property type="entry name" value="HOMEOBOX_2"/>
    <property type="match status" value="1"/>
</dbReference>
<dbReference type="PROSITE" id="PS00035">
    <property type="entry name" value="POU_1"/>
    <property type="match status" value="1"/>
</dbReference>
<dbReference type="PROSITE" id="PS00465">
    <property type="entry name" value="POU_2"/>
    <property type="match status" value="1"/>
</dbReference>
<dbReference type="PROSITE" id="PS51179">
    <property type="entry name" value="POU_3"/>
    <property type="match status" value="1"/>
</dbReference>
<evidence type="ECO:0000250" key="1"/>
<evidence type="ECO:0000255" key="2">
    <source>
        <dbReference type="PROSITE-ProRule" id="PRU00108"/>
    </source>
</evidence>
<evidence type="ECO:0000255" key="3">
    <source>
        <dbReference type="PROSITE-ProRule" id="PRU00530"/>
    </source>
</evidence>
<evidence type="ECO:0000256" key="4">
    <source>
        <dbReference type="SAM" id="MobiDB-lite"/>
    </source>
</evidence>
<evidence type="ECO:0000305" key="5"/>
<name>PDM2_DROVI</name>
<sequence>CGKSYEEEEEEEDDELEADVAQNLSSKRSARQLDADMENEVLNLARSVSPAAKRLALEHTAEPALAAQSAAAATPPVGLSLPPTAPLGFGPEDMQQALQLQLHSYIEMVRQLAPDAFPNPNLATQFLLQNSLQALAQFQALQQLKQQRDQQLPTASEQLPTRHYSTPLSKSPLRSPSLSPVARSMEPQQAQRTPPNSLAAAGLGLSSAVLTPNTPSMQQQQQQTMTSTTNASSTPKPLASGATVAAVMATKLEQSPEETTDLEELEQFAKTFKQRRIKLGFTQGDVGLAMGKLYGNDFSQTTISRFEALNLSFKNMCKLKPLLQKWLEDADSSVAKSAGGVFNINTMTTNLSSTPESILGRRRKKRTSIETTIRGALEQAFVLNCKPTSEEINQLSERLHMDKEVVRVWFCNRRQKEKRINPSLDLDSPTGTPLSSHAFGYPPQALNMSNGGHVLLEAGGSHCGSSISSGE</sequence>
<comment type="function">
    <text evidence="1">DNA-binding regulatory protein implicated in early development. Involved in neuronal cell fate decision. May act as an octamer-dependent activator of transcription (By similarity).</text>
</comment>
<comment type="subcellular location">
    <subcellularLocation>
        <location>Nucleus</location>
    </subcellularLocation>
</comment>
<comment type="developmental stage">
    <text>Expressed primarily during the first half of embryogenesis. Initial expression in cellular blastoderm stage, then in ectodermal stripes during germband extension. Broad expression in the neuroectoderm followed by limitation to discrete subsets of CNS cells, and expression in specific PNS neurons and support cells.</text>
</comment>
<comment type="similarity">
    <text evidence="5">Belongs to the POU transcription factor family. Class-2 subfamily.</text>
</comment>
<feature type="chain" id="PRO_0000100779" description="POU domain protein 2">
    <location>
        <begin position="1" status="less than"/>
        <end position="471"/>
    </location>
</feature>
<feature type="domain" description="POU-specific" evidence="3">
    <location>
        <begin position="257"/>
        <end position="331"/>
    </location>
</feature>
<feature type="DNA-binding region" description="Homeobox" evidence="2">
    <location>
        <begin position="362"/>
        <end position="421"/>
    </location>
</feature>
<feature type="region of interest" description="Disordered" evidence="4">
    <location>
        <begin position="1"/>
        <end position="32"/>
    </location>
</feature>
<feature type="region of interest" description="Disordered" evidence="4">
    <location>
        <begin position="149"/>
        <end position="238"/>
    </location>
</feature>
<feature type="compositionally biased region" description="Acidic residues" evidence="4">
    <location>
        <begin position="1"/>
        <end position="18"/>
    </location>
</feature>
<feature type="compositionally biased region" description="Low complexity" evidence="4">
    <location>
        <begin position="165"/>
        <end position="180"/>
    </location>
</feature>
<feature type="compositionally biased region" description="Polar residues" evidence="4">
    <location>
        <begin position="186"/>
        <end position="196"/>
    </location>
</feature>
<feature type="compositionally biased region" description="Low complexity" evidence="4">
    <location>
        <begin position="197"/>
        <end position="230"/>
    </location>
</feature>
<feature type="non-terminal residue">
    <location>
        <position position="1"/>
    </location>
</feature>
<keyword id="KW-0010">Activator</keyword>
<keyword id="KW-0217">Developmental protein</keyword>
<keyword id="KW-0238">DNA-binding</keyword>
<keyword id="KW-0371">Homeobox</keyword>
<keyword id="KW-0539">Nucleus</keyword>
<keyword id="KW-0804">Transcription</keyword>
<keyword id="KW-0805">Transcription regulation</keyword>
<gene>
    <name type="primary">pdm2</name>
    <name type="synonym">dim</name>
    <name type="synonym">OCT2</name>
    <name type="synonym">pdm-2</name>
    <name type="synonym">POU-28</name>
</gene>
<proteinExistence type="evidence at transcript level"/>